<name>RS20_MYCM1</name>
<sequence length="91" mass="10379">MANIKSKEKRILTNEKARVRNAAMKSHVRLAIKKAKRAIEEKNENVEQLLKDAHKVINTSVSHGVFHRNNAARKSSRLDAYAFKIQNKTAN</sequence>
<accession>Q6KHC4</accession>
<keyword id="KW-1185">Reference proteome</keyword>
<keyword id="KW-0687">Ribonucleoprotein</keyword>
<keyword id="KW-0689">Ribosomal protein</keyword>
<keyword id="KW-0694">RNA-binding</keyword>
<keyword id="KW-0699">rRNA-binding</keyword>
<evidence type="ECO:0000255" key="1">
    <source>
        <dbReference type="HAMAP-Rule" id="MF_00500"/>
    </source>
</evidence>
<evidence type="ECO:0000305" key="2"/>
<comment type="function">
    <text evidence="1">Binds directly to 16S ribosomal RNA.</text>
</comment>
<comment type="similarity">
    <text evidence="1">Belongs to the bacterial ribosomal protein bS20 family.</text>
</comment>
<gene>
    <name evidence="1" type="primary">rpsT</name>
    <name type="ordered locus">MMOB5200</name>
</gene>
<proteinExistence type="inferred from homology"/>
<organism>
    <name type="scientific">Mycoplasma mobile (strain ATCC 43663 / 163K / NCTC 11711)</name>
    <name type="common">Mesomycoplasma mobile</name>
    <dbReference type="NCBI Taxonomy" id="267748"/>
    <lineage>
        <taxon>Bacteria</taxon>
        <taxon>Bacillati</taxon>
        <taxon>Mycoplasmatota</taxon>
        <taxon>Mycoplasmoidales</taxon>
        <taxon>Metamycoplasmataceae</taxon>
        <taxon>Mesomycoplasma</taxon>
    </lineage>
</organism>
<reference key="1">
    <citation type="journal article" date="2004" name="Genome Res.">
        <title>The complete genome and proteome of Mycoplasma mobile.</title>
        <authorList>
            <person name="Jaffe J.D."/>
            <person name="Stange-Thomann N."/>
            <person name="Smith C."/>
            <person name="DeCaprio D."/>
            <person name="Fisher S."/>
            <person name="Butler J."/>
            <person name="Calvo S."/>
            <person name="Elkins T."/>
            <person name="FitzGerald M.G."/>
            <person name="Hafez N."/>
            <person name="Kodira C.D."/>
            <person name="Major J."/>
            <person name="Wang S."/>
            <person name="Wilkinson J."/>
            <person name="Nicol R."/>
            <person name="Nusbaum C."/>
            <person name="Birren B."/>
            <person name="Berg H.C."/>
            <person name="Church G.M."/>
        </authorList>
    </citation>
    <scope>NUCLEOTIDE SEQUENCE [LARGE SCALE GENOMIC DNA]</scope>
    <source>
        <strain>ATCC 43663 / NCTC 11711 / 163 K</strain>
    </source>
</reference>
<protein>
    <recommendedName>
        <fullName evidence="1">Small ribosomal subunit protein bS20</fullName>
    </recommendedName>
    <alternativeName>
        <fullName evidence="2">30S ribosomal protein S20</fullName>
    </alternativeName>
</protein>
<feature type="chain" id="PRO_0000167993" description="Small ribosomal subunit protein bS20">
    <location>
        <begin position="1"/>
        <end position="91"/>
    </location>
</feature>
<dbReference type="EMBL" id="AE017308">
    <property type="protein sequence ID" value="AAT28006.1"/>
    <property type="molecule type" value="Genomic_DNA"/>
</dbReference>
<dbReference type="RefSeq" id="WP_011265040.1">
    <property type="nucleotide sequence ID" value="NC_006908.1"/>
</dbReference>
<dbReference type="SMR" id="Q6KHC4"/>
<dbReference type="STRING" id="267748.MMOB5200"/>
<dbReference type="KEGG" id="mmo:MMOB5200"/>
<dbReference type="eggNOG" id="COG0268">
    <property type="taxonomic scope" value="Bacteria"/>
</dbReference>
<dbReference type="HOGENOM" id="CLU_160655_1_2_14"/>
<dbReference type="OrthoDB" id="9808392at2"/>
<dbReference type="Proteomes" id="UP000009072">
    <property type="component" value="Chromosome"/>
</dbReference>
<dbReference type="GO" id="GO:0005829">
    <property type="term" value="C:cytosol"/>
    <property type="evidence" value="ECO:0007669"/>
    <property type="project" value="TreeGrafter"/>
</dbReference>
<dbReference type="GO" id="GO:0015935">
    <property type="term" value="C:small ribosomal subunit"/>
    <property type="evidence" value="ECO:0007669"/>
    <property type="project" value="TreeGrafter"/>
</dbReference>
<dbReference type="GO" id="GO:0070181">
    <property type="term" value="F:small ribosomal subunit rRNA binding"/>
    <property type="evidence" value="ECO:0007669"/>
    <property type="project" value="TreeGrafter"/>
</dbReference>
<dbReference type="GO" id="GO:0003735">
    <property type="term" value="F:structural constituent of ribosome"/>
    <property type="evidence" value="ECO:0007669"/>
    <property type="project" value="InterPro"/>
</dbReference>
<dbReference type="GO" id="GO:0006412">
    <property type="term" value="P:translation"/>
    <property type="evidence" value="ECO:0007669"/>
    <property type="project" value="UniProtKB-UniRule"/>
</dbReference>
<dbReference type="Gene3D" id="1.20.58.110">
    <property type="entry name" value="Ribosomal protein S20"/>
    <property type="match status" value="1"/>
</dbReference>
<dbReference type="HAMAP" id="MF_00500">
    <property type="entry name" value="Ribosomal_bS20"/>
    <property type="match status" value="1"/>
</dbReference>
<dbReference type="InterPro" id="IPR002583">
    <property type="entry name" value="Ribosomal_bS20"/>
</dbReference>
<dbReference type="InterPro" id="IPR036510">
    <property type="entry name" value="Ribosomal_bS20_sf"/>
</dbReference>
<dbReference type="NCBIfam" id="TIGR00029">
    <property type="entry name" value="S20"/>
    <property type="match status" value="1"/>
</dbReference>
<dbReference type="PANTHER" id="PTHR33398">
    <property type="entry name" value="30S RIBOSOMAL PROTEIN S20"/>
    <property type="match status" value="1"/>
</dbReference>
<dbReference type="PANTHER" id="PTHR33398:SF1">
    <property type="entry name" value="SMALL RIBOSOMAL SUBUNIT PROTEIN BS20C"/>
    <property type="match status" value="1"/>
</dbReference>
<dbReference type="Pfam" id="PF01649">
    <property type="entry name" value="Ribosomal_S20p"/>
    <property type="match status" value="1"/>
</dbReference>
<dbReference type="SUPFAM" id="SSF46992">
    <property type="entry name" value="Ribosomal protein S20"/>
    <property type="match status" value="1"/>
</dbReference>